<name>MUTL_ANAD2</name>
<feature type="chain" id="PRO_1000192152" description="DNA mismatch repair protein MutL">
    <location>
        <begin position="1"/>
        <end position="607"/>
    </location>
</feature>
<proteinExistence type="inferred from homology"/>
<reference key="1">
    <citation type="submission" date="2009-01" db="EMBL/GenBank/DDBJ databases">
        <title>Complete sequence of Anaeromyxobacter dehalogenans 2CP-1.</title>
        <authorList>
            <person name="Lucas S."/>
            <person name="Copeland A."/>
            <person name="Lapidus A."/>
            <person name="Glavina del Rio T."/>
            <person name="Dalin E."/>
            <person name="Tice H."/>
            <person name="Bruce D."/>
            <person name="Goodwin L."/>
            <person name="Pitluck S."/>
            <person name="Saunders E."/>
            <person name="Brettin T."/>
            <person name="Detter J.C."/>
            <person name="Han C."/>
            <person name="Larimer F."/>
            <person name="Land M."/>
            <person name="Hauser L."/>
            <person name="Kyrpides N."/>
            <person name="Ovchinnikova G."/>
            <person name="Beliaev A.S."/>
            <person name="Richardson P."/>
        </authorList>
    </citation>
    <scope>NUCLEOTIDE SEQUENCE [LARGE SCALE GENOMIC DNA]</scope>
    <source>
        <strain>2CP-1 / ATCC BAA-258</strain>
    </source>
</reference>
<accession>B8J9F5</accession>
<organism>
    <name type="scientific">Anaeromyxobacter dehalogenans (strain 2CP-1 / ATCC BAA-258)</name>
    <dbReference type="NCBI Taxonomy" id="455488"/>
    <lineage>
        <taxon>Bacteria</taxon>
        <taxon>Pseudomonadati</taxon>
        <taxon>Myxococcota</taxon>
        <taxon>Myxococcia</taxon>
        <taxon>Myxococcales</taxon>
        <taxon>Cystobacterineae</taxon>
        <taxon>Anaeromyxobacteraceae</taxon>
        <taxon>Anaeromyxobacter</taxon>
    </lineage>
</organism>
<keyword id="KW-0227">DNA damage</keyword>
<keyword id="KW-0234">DNA repair</keyword>
<comment type="function">
    <text evidence="1">This protein is involved in the repair of mismatches in DNA. It is required for dam-dependent methyl-directed DNA mismatch repair. May act as a 'molecular matchmaker', a protein that promotes the formation of a stable complex between two or more DNA-binding proteins in an ATP-dependent manner without itself being part of a final effector complex.</text>
</comment>
<comment type="similarity">
    <text evidence="1">Belongs to the DNA mismatch repair MutL/HexB family.</text>
</comment>
<gene>
    <name evidence="1" type="primary">mutL</name>
    <name type="ordered locus">A2cp1_2223</name>
</gene>
<sequence length="607" mass="63793">MPRIHVLPPGLVNQIAAGEVVERPASIVKELVENALDAGATSVGVDVEEGGLALVRVADDGSGMDRDDALLALERHATSKLRDAEGLAAIGTMGFRGEAVPAIASVSRFRLDTSAGEDGAGTRVEIEGGVLGEVAPVARPRGTTVEVRDLFFNTPARRKFMRAASTEAGHVSEAVIRLALARPDVGFTLRSAGRLVLGARAGGGLADRAGQALGREAHRHLLPVDARRGEVRVHGLICSPDHSEATGRALYLFVNGRYVRDRAAAHAVLRAFAGTLPPGRHPAGVLFVELPLHRVDVNVHPQKLEVRFAEGREVFDALFHTVAGALRTAPWLRARPQPGDGVPAGNGGGPAPVPVAGEEAAEVLAWARAARPPEGSGATLVQPAPGAWATGRLAFPVAPAPGAGPEAGPRPEGYFAALRYVGQHARTYLLCEAPGGTLVVIDQHASHERMLFHRLREAFRARRIPVQPFLLPQVVTLPPAAARALEAGLAELGRLGFDAEPFGGEAFAVKGAPAALAGVDLTALLTDLGSQLAEVERGSAVDDAFHDLLATMACHAAVRANQDVSPEEARALLDGLDAIDFKARCPHGRPVVFELSLADLERRVGRR</sequence>
<dbReference type="EMBL" id="CP001359">
    <property type="protein sequence ID" value="ACL65561.1"/>
    <property type="molecule type" value="Genomic_DNA"/>
</dbReference>
<dbReference type="RefSeq" id="WP_012633402.1">
    <property type="nucleotide sequence ID" value="NC_011891.1"/>
</dbReference>
<dbReference type="SMR" id="B8J9F5"/>
<dbReference type="KEGG" id="acp:A2cp1_2223"/>
<dbReference type="HOGENOM" id="CLU_004131_4_2_7"/>
<dbReference type="Proteomes" id="UP000007089">
    <property type="component" value="Chromosome"/>
</dbReference>
<dbReference type="GO" id="GO:0032300">
    <property type="term" value="C:mismatch repair complex"/>
    <property type="evidence" value="ECO:0007669"/>
    <property type="project" value="InterPro"/>
</dbReference>
<dbReference type="GO" id="GO:0005524">
    <property type="term" value="F:ATP binding"/>
    <property type="evidence" value="ECO:0007669"/>
    <property type="project" value="InterPro"/>
</dbReference>
<dbReference type="GO" id="GO:0016887">
    <property type="term" value="F:ATP hydrolysis activity"/>
    <property type="evidence" value="ECO:0007669"/>
    <property type="project" value="InterPro"/>
</dbReference>
<dbReference type="GO" id="GO:0140664">
    <property type="term" value="F:ATP-dependent DNA damage sensor activity"/>
    <property type="evidence" value="ECO:0007669"/>
    <property type="project" value="InterPro"/>
</dbReference>
<dbReference type="GO" id="GO:0030983">
    <property type="term" value="F:mismatched DNA binding"/>
    <property type="evidence" value="ECO:0007669"/>
    <property type="project" value="InterPro"/>
</dbReference>
<dbReference type="GO" id="GO:0006298">
    <property type="term" value="P:mismatch repair"/>
    <property type="evidence" value="ECO:0007669"/>
    <property type="project" value="UniProtKB-UniRule"/>
</dbReference>
<dbReference type="CDD" id="cd16926">
    <property type="entry name" value="HATPase_MutL-MLH-PMS-like"/>
    <property type="match status" value="1"/>
</dbReference>
<dbReference type="CDD" id="cd00782">
    <property type="entry name" value="MutL_Trans"/>
    <property type="match status" value="1"/>
</dbReference>
<dbReference type="FunFam" id="3.30.565.10:FF:000003">
    <property type="entry name" value="DNA mismatch repair endonuclease MutL"/>
    <property type="match status" value="1"/>
</dbReference>
<dbReference type="Gene3D" id="3.30.230.10">
    <property type="match status" value="1"/>
</dbReference>
<dbReference type="Gene3D" id="3.30.565.10">
    <property type="entry name" value="Histidine kinase-like ATPase, C-terminal domain"/>
    <property type="match status" value="1"/>
</dbReference>
<dbReference type="Gene3D" id="3.30.1540.20">
    <property type="entry name" value="MutL, C-terminal domain, dimerisation subdomain"/>
    <property type="match status" value="1"/>
</dbReference>
<dbReference type="Gene3D" id="3.30.1370.100">
    <property type="entry name" value="MutL, C-terminal domain, regulatory subdomain"/>
    <property type="match status" value="1"/>
</dbReference>
<dbReference type="HAMAP" id="MF_00149">
    <property type="entry name" value="DNA_mis_repair"/>
    <property type="match status" value="1"/>
</dbReference>
<dbReference type="InterPro" id="IPR020667">
    <property type="entry name" value="DNA_mismatch_repair_MutL"/>
</dbReference>
<dbReference type="InterPro" id="IPR013507">
    <property type="entry name" value="DNA_mismatch_S5_2-like"/>
</dbReference>
<dbReference type="InterPro" id="IPR036890">
    <property type="entry name" value="HATPase_C_sf"/>
</dbReference>
<dbReference type="InterPro" id="IPR002099">
    <property type="entry name" value="MutL/Mlh/PMS"/>
</dbReference>
<dbReference type="InterPro" id="IPR038973">
    <property type="entry name" value="MutL/Mlh/Pms-like"/>
</dbReference>
<dbReference type="InterPro" id="IPR014790">
    <property type="entry name" value="MutL_C"/>
</dbReference>
<dbReference type="InterPro" id="IPR042120">
    <property type="entry name" value="MutL_C_dimsub"/>
</dbReference>
<dbReference type="InterPro" id="IPR042121">
    <property type="entry name" value="MutL_C_regsub"/>
</dbReference>
<dbReference type="InterPro" id="IPR037198">
    <property type="entry name" value="MutL_C_sf"/>
</dbReference>
<dbReference type="InterPro" id="IPR020568">
    <property type="entry name" value="Ribosomal_Su5_D2-typ_SF"/>
</dbReference>
<dbReference type="InterPro" id="IPR014721">
    <property type="entry name" value="Ribsml_uS5_D2-typ_fold_subgr"/>
</dbReference>
<dbReference type="NCBIfam" id="TIGR00585">
    <property type="entry name" value="mutl"/>
    <property type="match status" value="1"/>
</dbReference>
<dbReference type="PANTHER" id="PTHR10073">
    <property type="entry name" value="DNA MISMATCH REPAIR PROTEIN MLH, PMS, MUTL"/>
    <property type="match status" value="1"/>
</dbReference>
<dbReference type="PANTHER" id="PTHR10073:SF12">
    <property type="entry name" value="DNA MISMATCH REPAIR PROTEIN MLH1"/>
    <property type="match status" value="1"/>
</dbReference>
<dbReference type="Pfam" id="PF01119">
    <property type="entry name" value="DNA_mis_repair"/>
    <property type="match status" value="1"/>
</dbReference>
<dbReference type="Pfam" id="PF13589">
    <property type="entry name" value="HATPase_c_3"/>
    <property type="match status" value="1"/>
</dbReference>
<dbReference type="Pfam" id="PF08676">
    <property type="entry name" value="MutL_C"/>
    <property type="match status" value="1"/>
</dbReference>
<dbReference type="SMART" id="SM01340">
    <property type="entry name" value="DNA_mis_repair"/>
    <property type="match status" value="1"/>
</dbReference>
<dbReference type="SMART" id="SM00853">
    <property type="entry name" value="MutL_C"/>
    <property type="match status" value="1"/>
</dbReference>
<dbReference type="SUPFAM" id="SSF55874">
    <property type="entry name" value="ATPase domain of HSP90 chaperone/DNA topoisomerase II/histidine kinase"/>
    <property type="match status" value="1"/>
</dbReference>
<dbReference type="SUPFAM" id="SSF118116">
    <property type="entry name" value="DNA mismatch repair protein MutL"/>
    <property type="match status" value="1"/>
</dbReference>
<dbReference type="SUPFAM" id="SSF54211">
    <property type="entry name" value="Ribosomal protein S5 domain 2-like"/>
    <property type="match status" value="1"/>
</dbReference>
<protein>
    <recommendedName>
        <fullName evidence="1">DNA mismatch repair protein MutL</fullName>
    </recommendedName>
</protein>
<evidence type="ECO:0000255" key="1">
    <source>
        <dbReference type="HAMAP-Rule" id="MF_00149"/>
    </source>
</evidence>